<proteinExistence type="inferred from homology"/>
<keyword id="KW-0067">ATP-binding</keyword>
<keyword id="KW-0460">Magnesium</keyword>
<keyword id="KW-0547">Nucleotide-binding</keyword>
<keyword id="KW-1185">Reference proteome</keyword>
<keyword id="KW-0808">Transferase</keyword>
<keyword id="KW-0819">tRNA processing</keyword>
<gene>
    <name evidence="1" type="primary">miaA</name>
    <name type="ordered locus">Lcho_1285</name>
</gene>
<protein>
    <recommendedName>
        <fullName evidence="1">tRNA dimethylallyltransferase</fullName>
        <ecNumber evidence="1">2.5.1.75</ecNumber>
    </recommendedName>
    <alternativeName>
        <fullName evidence="1">Dimethylallyl diphosphate:tRNA dimethylallyltransferase</fullName>
        <shortName evidence="1">DMAPP:tRNA dimethylallyltransferase</shortName>
        <shortName evidence="1">DMATase</shortName>
    </alternativeName>
    <alternativeName>
        <fullName evidence="1">Isopentenyl-diphosphate:tRNA isopentenyltransferase</fullName>
        <shortName evidence="1">IPP transferase</shortName>
        <shortName evidence="1">IPPT</shortName>
        <shortName evidence="1">IPTase</shortName>
    </alternativeName>
</protein>
<name>MIAA_LEPCP</name>
<feature type="chain" id="PRO_0000377208" description="tRNA dimethylallyltransferase">
    <location>
        <begin position="1"/>
        <end position="328"/>
    </location>
</feature>
<feature type="region of interest" description="Interaction with substrate tRNA" evidence="1">
    <location>
        <begin position="50"/>
        <end position="53"/>
    </location>
</feature>
<feature type="region of interest" description="Interaction with substrate tRNA" evidence="1">
    <location>
        <begin position="174"/>
        <end position="178"/>
    </location>
</feature>
<feature type="region of interest" description="Interaction with substrate tRNA" evidence="1">
    <location>
        <begin position="257"/>
        <end position="262"/>
    </location>
</feature>
<feature type="binding site" evidence="1">
    <location>
        <begin position="19"/>
        <end position="26"/>
    </location>
    <ligand>
        <name>ATP</name>
        <dbReference type="ChEBI" id="CHEBI:30616"/>
    </ligand>
</feature>
<feature type="binding site" evidence="1">
    <location>
        <begin position="21"/>
        <end position="26"/>
    </location>
    <ligand>
        <name>substrate</name>
    </ligand>
</feature>
<feature type="site" description="Interaction with substrate tRNA" evidence="1">
    <location>
        <position position="116"/>
    </location>
</feature>
<feature type="site" description="Interaction with substrate tRNA" evidence="1">
    <location>
        <position position="138"/>
    </location>
</feature>
<comment type="function">
    <text evidence="1">Catalyzes the transfer of a dimethylallyl group onto the adenine at position 37 in tRNAs that read codons beginning with uridine, leading to the formation of N6-(dimethylallyl)adenosine (i(6)A).</text>
</comment>
<comment type="catalytic activity">
    <reaction evidence="1">
        <text>adenosine(37) in tRNA + dimethylallyl diphosphate = N(6)-dimethylallyladenosine(37) in tRNA + diphosphate</text>
        <dbReference type="Rhea" id="RHEA:26482"/>
        <dbReference type="Rhea" id="RHEA-COMP:10162"/>
        <dbReference type="Rhea" id="RHEA-COMP:10375"/>
        <dbReference type="ChEBI" id="CHEBI:33019"/>
        <dbReference type="ChEBI" id="CHEBI:57623"/>
        <dbReference type="ChEBI" id="CHEBI:74411"/>
        <dbReference type="ChEBI" id="CHEBI:74415"/>
        <dbReference type="EC" id="2.5.1.75"/>
    </reaction>
</comment>
<comment type="cofactor">
    <cofactor evidence="1">
        <name>Mg(2+)</name>
        <dbReference type="ChEBI" id="CHEBI:18420"/>
    </cofactor>
</comment>
<comment type="subunit">
    <text evidence="1">Monomer.</text>
</comment>
<comment type="similarity">
    <text evidence="1">Belongs to the IPP transferase family.</text>
</comment>
<accession>B1Y5G6</accession>
<evidence type="ECO:0000255" key="1">
    <source>
        <dbReference type="HAMAP-Rule" id="MF_00185"/>
    </source>
</evidence>
<reference key="1">
    <citation type="submission" date="2008-03" db="EMBL/GenBank/DDBJ databases">
        <title>Complete sequence of Leptothrix cholodnii SP-6.</title>
        <authorList>
            <consortium name="US DOE Joint Genome Institute"/>
            <person name="Copeland A."/>
            <person name="Lucas S."/>
            <person name="Lapidus A."/>
            <person name="Glavina del Rio T."/>
            <person name="Dalin E."/>
            <person name="Tice H."/>
            <person name="Bruce D."/>
            <person name="Goodwin L."/>
            <person name="Pitluck S."/>
            <person name="Chertkov O."/>
            <person name="Brettin T."/>
            <person name="Detter J.C."/>
            <person name="Han C."/>
            <person name="Kuske C.R."/>
            <person name="Schmutz J."/>
            <person name="Larimer F."/>
            <person name="Land M."/>
            <person name="Hauser L."/>
            <person name="Kyrpides N."/>
            <person name="Lykidis A."/>
            <person name="Emerson D."/>
            <person name="Richardson P."/>
        </authorList>
    </citation>
    <scope>NUCLEOTIDE SEQUENCE [LARGE SCALE GENOMIC DNA]</scope>
    <source>
        <strain>ATCC 51168 / LMG 8142 / SP-6</strain>
    </source>
</reference>
<dbReference type="EC" id="2.5.1.75" evidence="1"/>
<dbReference type="EMBL" id="CP001013">
    <property type="protein sequence ID" value="ACB33554.1"/>
    <property type="molecule type" value="Genomic_DNA"/>
</dbReference>
<dbReference type="RefSeq" id="WP_012346316.1">
    <property type="nucleotide sequence ID" value="NC_010524.1"/>
</dbReference>
<dbReference type="SMR" id="B1Y5G6"/>
<dbReference type="STRING" id="395495.Lcho_1285"/>
<dbReference type="KEGG" id="lch:Lcho_1285"/>
<dbReference type="eggNOG" id="COG0324">
    <property type="taxonomic scope" value="Bacteria"/>
</dbReference>
<dbReference type="HOGENOM" id="CLU_032616_0_0_4"/>
<dbReference type="OrthoDB" id="9776390at2"/>
<dbReference type="Proteomes" id="UP000001693">
    <property type="component" value="Chromosome"/>
</dbReference>
<dbReference type="GO" id="GO:0005524">
    <property type="term" value="F:ATP binding"/>
    <property type="evidence" value="ECO:0007669"/>
    <property type="project" value="UniProtKB-UniRule"/>
</dbReference>
<dbReference type="GO" id="GO:0052381">
    <property type="term" value="F:tRNA dimethylallyltransferase activity"/>
    <property type="evidence" value="ECO:0007669"/>
    <property type="project" value="UniProtKB-UniRule"/>
</dbReference>
<dbReference type="GO" id="GO:0006400">
    <property type="term" value="P:tRNA modification"/>
    <property type="evidence" value="ECO:0007669"/>
    <property type="project" value="TreeGrafter"/>
</dbReference>
<dbReference type="FunFam" id="1.10.20.140:FF:000001">
    <property type="entry name" value="tRNA dimethylallyltransferase"/>
    <property type="match status" value="1"/>
</dbReference>
<dbReference type="Gene3D" id="1.10.20.140">
    <property type="match status" value="1"/>
</dbReference>
<dbReference type="Gene3D" id="3.40.50.300">
    <property type="entry name" value="P-loop containing nucleotide triphosphate hydrolases"/>
    <property type="match status" value="1"/>
</dbReference>
<dbReference type="HAMAP" id="MF_00185">
    <property type="entry name" value="IPP_trans"/>
    <property type="match status" value="1"/>
</dbReference>
<dbReference type="InterPro" id="IPR039657">
    <property type="entry name" value="Dimethylallyltransferase"/>
</dbReference>
<dbReference type="InterPro" id="IPR018022">
    <property type="entry name" value="IPT"/>
</dbReference>
<dbReference type="InterPro" id="IPR027417">
    <property type="entry name" value="P-loop_NTPase"/>
</dbReference>
<dbReference type="NCBIfam" id="TIGR00174">
    <property type="entry name" value="miaA"/>
    <property type="match status" value="1"/>
</dbReference>
<dbReference type="PANTHER" id="PTHR11088">
    <property type="entry name" value="TRNA DIMETHYLALLYLTRANSFERASE"/>
    <property type="match status" value="1"/>
</dbReference>
<dbReference type="PANTHER" id="PTHR11088:SF60">
    <property type="entry name" value="TRNA DIMETHYLALLYLTRANSFERASE"/>
    <property type="match status" value="1"/>
</dbReference>
<dbReference type="Pfam" id="PF01715">
    <property type="entry name" value="IPPT"/>
    <property type="match status" value="1"/>
</dbReference>
<dbReference type="SUPFAM" id="SSF52540">
    <property type="entry name" value="P-loop containing nucleoside triphosphate hydrolases"/>
    <property type="match status" value="1"/>
</dbReference>
<organism>
    <name type="scientific">Leptothrix cholodnii (strain ATCC 51168 / LMG 8142 / SP-6)</name>
    <name type="common">Leptothrix discophora (strain SP-6)</name>
    <dbReference type="NCBI Taxonomy" id="395495"/>
    <lineage>
        <taxon>Bacteria</taxon>
        <taxon>Pseudomonadati</taxon>
        <taxon>Pseudomonadota</taxon>
        <taxon>Betaproteobacteria</taxon>
        <taxon>Burkholderiales</taxon>
        <taxon>Sphaerotilaceae</taxon>
        <taxon>Leptothrix</taxon>
    </lineage>
</organism>
<sequence length="328" mass="35736">MPERNPVAPPALPWLAIAGPTASGKTGAALAIARHWRQRGGPPVEIISVDSALVYRGMDIGTAKPSAAERAEVPHHLIDLIEPTAAYSAAEFAADAARLIGEIHGRGALPLLVGGTMLYFKVWLDGIDPLPTADAGVRAQIDQRARELGWPALHAELARVDPITAARLAPADAQRIQRALEVWQISGQPLSSLHTGRSASSAWAHSGLMLSLEPTSRAWLHQRIGERFEAMLAAGLIDEVEHLRARGDLHPDLPSMRCVGYRQTWEMLDGLWPSAELLERCSAATRQLAKRQLTWLRGMPRRQVLACDEPGLVERVLSRADAWQADAR</sequence>